<name>DATIN_MYCTU</name>
<keyword id="KW-1185">Reference proteome</keyword>
<keyword id="KW-0843">Virulence</keyword>
<organism>
    <name type="scientific">Mycobacterium tuberculosis (strain ATCC 25618 / H37Rv)</name>
    <dbReference type="NCBI Taxonomy" id="83332"/>
    <lineage>
        <taxon>Bacteria</taxon>
        <taxon>Bacillati</taxon>
        <taxon>Actinomycetota</taxon>
        <taxon>Actinomycetes</taxon>
        <taxon>Mycobacteriales</taxon>
        <taxon>Mycobacteriaceae</taxon>
        <taxon>Mycobacterium</taxon>
        <taxon>Mycobacterium tuberculosis complex</taxon>
    </lineage>
</organism>
<dbReference type="EMBL" id="AL123456">
    <property type="protein sequence ID" value="CCP42804.1"/>
    <property type="molecule type" value="Genomic_DNA"/>
</dbReference>
<dbReference type="PIR" id="H70849">
    <property type="entry name" value="H70849"/>
</dbReference>
<dbReference type="RefSeq" id="NP_214593.1">
    <property type="nucleotide sequence ID" value="NC_000962.3"/>
</dbReference>
<dbReference type="RefSeq" id="WP_003400655.1">
    <property type="nucleotide sequence ID" value="NZ_NVQJ01000005.1"/>
</dbReference>
<dbReference type="SMR" id="P9WMA9"/>
<dbReference type="STRING" id="83332.Rv0079"/>
<dbReference type="PaxDb" id="83332-Rv0079"/>
<dbReference type="DNASU" id="886995"/>
<dbReference type="GeneID" id="886995"/>
<dbReference type="KEGG" id="mtu:Rv0079"/>
<dbReference type="KEGG" id="mtv:RVBD_0079"/>
<dbReference type="TubercuList" id="Rv0079"/>
<dbReference type="eggNOG" id="COG1544">
    <property type="taxonomic scope" value="Bacteria"/>
</dbReference>
<dbReference type="InParanoid" id="P9WMA9"/>
<dbReference type="OrthoDB" id="3825664at2"/>
<dbReference type="Proteomes" id="UP000001584">
    <property type="component" value="Chromosome"/>
</dbReference>
<dbReference type="GO" id="GO:0022627">
    <property type="term" value="C:cytosolic small ribosomal subunit"/>
    <property type="evidence" value="ECO:0000318"/>
    <property type="project" value="GO_Central"/>
</dbReference>
<dbReference type="GO" id="GO:0009274">
    <property type="term" value="C:peptidoglycan-based cell wall"/>
    <property type="evidence" value="ECO:0007005"/>
    <property type="project" value="MTBBASE"/>
</dbReference>
<dbReference type="GO" id="GO:0005886">
    <property type="term" value="C:plasma membrane"/>
    <property type="evidence" value="ECO:0007005"/>
    <property type="project" value="MTBBASE"/>
</dbReference>
<dbReference type="GO" id="GO:0043024">
    <property type="term" value="F:ribosomal small subunit binding"/>
    <property type="evidence" value="ECO:0000318"/>
    <property type="project" value="GO_Central"/>
</dbReference>
<dbReference type="GO" id="GO:0045900">
    <property type="term" value="P:negative regulation of translational elongation"/>
    <property type="evidence" value="ECO:0000318"/>
    <property type="project" value="GO_Central"/>
</dbReference>
<dbReference type="FunFam" id="3.30.505.50:FF:000005">
    <property type="entry name" value="Dormancy associated translation inhibitor"/>
    <property type="match status" value="1"/>
</dbReference>
<dbReference type="Gene3D" id="3.30.505.50">
    <property type="entry name" value="Sigma 54 modulation/S30EA ribosomal protein, C-terminal domain"/>
    <property type="match status" value="2"/>
</dbReference>
<dbReference type="InterPro" id="IPR050574">
    <property type="entry name" value="HPF/YfiA_ribosome-assoc"/>
</dbReference>
<dbReference type="InterPro" id="IPR032528">
    <property type="entry name" value="Ribosom_S30AE_C"/>
</dbReference>
<dbReference type="InterPro" id="IPR038416">
    <property type="entry name" value="Ribosom_S30AE_C_sf"/>
</dbReference>
<dbReference type="PANTHER" id="PTHR33231">
    <property type="entry name" value="30S RIBOSOMAL PROTEIN"/>
    <property type="match status" value="1"/>
</dbReference>
<dbReference type="PANTHER" id="PTHR33231:SF1">
    <property type="entry name" value="30S RIBOSOMAL PROTEIN"/>
    <property type="match status" value="1"/>
</dbReference>
<dbReference type="Pfam" id="PF16321">
    <property type="entry name" value="Ribosom_S30AE_C"/>
    <property type="match status" value="1"/>
</dbReference>
<protein>
    <recommendedName>
        <fullName evidence="7">Dormancy associated translation inhibitor</fullName>
        <shortName evidence="7">DATIN</shortName>
    </recommendedName>
</protein>
<accession>P9WMA9</accession>
<accession>L0T2D8</accession>
<accession>O53624</accession>
<accession>Q7DAH6</accession>
<comment type="function">
    <text evidence="5 6 8">Involved in translation regulation (PubMed:19795912, PubMed:22719925). Inhibits protein synthesis and decreases bacterial growth when expressed in E.coli (PubMed:22719925). Can also stimulate macrophages and peripheral blood mononuclear cells (PBMC) to secrete important cytokines that may be significant in granuloma formation and its maintenance. Increases secretion of IFN-gamma, TNF-alpha, IL-1 beta and IL-8 through human Toll-like receptor 2 (TLR2) signaling pathway (PubMed:23819907).</text>
</comment>
<comment type="subunit">
    <text evidence="5 6">Interacts with human TLR2 (PubMed:23819907). Monomer in solution (PubMed:22719925). In vitro, binds to E.coli ribosomes (PubMed:22719925).</text>
</comment>
<comment type="induction">
    <text evidence="1 2 3 4">A member of the dormancy regulon. Induced in response to reduced oxygen tension (hypoxia), low levels of nitric oxide (NO) and carbon monoxide (CO). It is hoped that this regulon will give insight into the latent, or dormant phase of infection.</text>
</comment>
<reference key="1">
    <citation type="journal article" date="1998" name="Nature">
        <title>Deciphering the biology of Mycobacterium tuberculosis from the complete genome sequence.</title>
        <authorList>
            <person name="Cole S.T."/>
            <person name="Brosch R."/>
            <person name="Parkhill J."/>
            <person name="Garnier T."/>
            <person name="Churcher C.M."/>
            <person name="Harris D.E."/>
            <person name="Gordon S.V."/>
            <person name="Eiglmeier K."/>
            <person name="Gas S."/>
            <person name="Barry C.E. III"/>
            <person name="Tekaia F."/>
            <person name="Badcock K."/>
            <person name="Basham D."/>
            <person name="Brown D."/>
            <person name="Chillingworth T."/>
            <person name="Connor R."/>
            <person name="Davies R.M."/>
            <person name="Devlin K."/>
            <person name="Feltwell T."/>
            <person name="Gentles S."/>
            <person name="Hamlin N."/>
            <person name="Holroyd S."/>
            <person name="Hornsby T."/>
            <person name="Jagels K."/>
            <person name="Krogh A."/>
            <person name="McLean J."/>
            <person name="Moule S."/>
            <person name="Murphy L.D."/>
            <person name="Oliver S."/>
            <person name="Osborne J."/>
            <person name="Quail M.A."/>
            <person name="Rajandream M.A."/>
            <person name="Rogers J."/>
            <person name="Rutter S."/>
            <person name="Seeger K."/>
            <person name="Skelton S."/>
            <person name="Squares S."/>
            <person name="Squares R."/>
            <person name="Sulston J.E."/>
            <person name="Taylor K."/>
            <person name="Whitehead S."/>
            <person name="Barrell B.G."/>
        </authorList>
    </citation>
    <scope>NUCLEOTIDE SEQUENCE [LARGE SCALE GENOMIC DNA]</scope>
    <source>
        <strain>ATCC 25618 / H37Rv</strain>
    </source>
</reference>
<reference key="2">
    <citation type="journal article" date="2001" name="Proc. Natl. Acad. Sci. U.S.A.">
        <title>Regulation of the Mycobacterium tuberculosis hypoxic response gene encoding alpha -crystallin.</title>
        <authorList>
            <person name="Sherman D.R."/>
            <person name="Voskuil M."/>
            <person name="Schnappinger D."/>
            <person name="Liao R."/>
            <person name="Harrell M.I."/>
            <person name="Schoolnik G.K."/>
        </authorList>
    </citation>
    <scope>INDUCTION BY HYPOXIA</scope>
    <source>
        <strain>ATCC 25618 / H37Rv</strain>
    </source>
</reference>
<reference key="3">
    <citation type="journal article" date="2003" name="J. Exp. Med.">
        <title>Inhibition of respiration by nitric oxide induces a Mycobacterium tuberculosis dormancy program.</title>
        <authorList>
            <person name="Voskuil M.I."/>
            <person name="Schnappinger D."/>
            <person name="Visconti K.C."/>
            <person name="Harrell M.I."/>
            <person name="Dolganov G.M."/>
            <person name="Sherman D.R."/>
            <person name="Schoolnik G.K."/>
        </authorList>
    </citation>
    <scope>INDUCTION BY NITRIC OXIDE (NO) AND BY HYPOXIA</scope>
    <scope>DORMANCY REGULON</scope>
    <source>
        <strain>ATCC 25618 / H37Rv</strain>
    </source>
</reference>
<reference key="4">
    <citation type="journal article" date="2008" name="Cell Host Microbe">
        <title>Mycobacterium tuberculosis senses host-derived carbon monoxide during macrophage infection.</title>
        <authorList>
            <person name="Shiloh M.U."/>
            <person name="Manzanillo P."/>
            <person name="Cox J.S."/>
        </authorList>
    </citation>
    <scope>INDUCTION BY CARBON MONOXIDE (CO)</scope>
    <source>
        <strain>ATCC 35801 / TMC 107 / Erdman</strain>
    </source>
</reference>
<reference key="5">
    <citation type="journal article" date="2008" name="J. Biol. Chem.">
        <title>Heme oxygenase-1-derived carbon monoxide induces the Mycobacterium tuberculosis dormancy regulon.</title>
        <authorList>
            <person name="Kumar A."/>
            <person name="Deshane J.S."/>
            <person name="Crossman D.K."/>
            <person name="Bolisetty S."/>
            <person name="Yan B.S."/>
            <person name="Kramnik I."/>
            <person name="Agarwal A."/>
            <person name="Steyn A.J."/>
        </authorList>
    </citation>
    <scope>INDUCTION BY CARBON MONOXIDE (CO)</scope>
    <scope>DORMANCY REGULON</scope>
    <source>
        <strain>ATCC 25618 / H37Rv</strain>
    </source>
</reference>
<reference key="6">
    <citation type="journal article" date="2009" name="J. Biomol. Struct. Dyn.">
        <title>Function prediction of Rv0079, a hypothetical Mycobacterium tuberculosis DosR regulon protein.</title>
        <authorList>
            <person name="Mishra S."/>
        </authorList>
    </citation>
    <scope>FUNCTION PREDICTION</scope>
</reference>
<reference key="7">
    <citation type="journal article" date="2011" name="Mol. Cell. Proteomics">
        <title>Proteogenomic analysis of Mycobacterium tuberculosis by high resolution mass spectrometry.</title>
        <authorList>
            <person name="Kelkar D.S."/>
            <person name="Kumar D."/>
            <person name="Kumar P."/>
            <person name="Balakrishnan L."/>
            <person name="Muthusamy B."/>
            <person name="Yadav A.K."/>
            <person name="Shrivastava P."/>
            <person name="Marimuthu A."/>
            <person name="Anand S."/>
            <person name="Sundaram H."/>
            <person name="Kingsbury R."/>
            <person name="Harsha H.C."/>
            <person name="Nair B."/>
            <person name="Prasad T.S."/>
            <person name="Chauhan D.S."/>
            <person name="Katoch K."/>
            <person name="Katoch V.M."/>
            <person name="Kumar P."/>
            <person name="Chaerkady R."/>
            <person name="Ramachandran S."/>
            <person name="Dash D."/>
            <person name="Pandey A."/>
        </authorList>
    </citation>
    <scope>IDENTIFICATION BY MASS SPECTROMETRY [LARGE SCALE ANALYSIS]</scope>
    <source>
        <strain>ATCC 25618 / H37Rv</strain>
    </source>
</reference>
<reference key="8">
    <citation type="journal article" date="2012" name="PLoS ONE">
        <title>Mycobacterium tuberculosis DosR regulon gene Rv0079 encodes a putative, 'dormancy associated translation inhibitor (DATIN)'.</title>
        <authorList>
            <person name="Kumar A."/>
            <person name="Majid M."/>
            <person name="Kunisch R."/>
            <person name="Rani P.S."/>
            <person name="Qureshi I.A."/>
            <person name="Lewin A."/>
            <person name="Hasnain S.E."/>
            <person name="Ahmed N."/>
        </authorList>
    </citation>
    <scope>FUNCTION IN E.COLI</scope>
    <scope>SUBUNIT</scope>
</reference>
<reference key="9">
    <citation type="journal article" date="2013" name="Cytokine">
        <title>Dormancy associated translation inhibitor (DATIN/Rv0079) of Mycobacterium tuberculosis interacts with TLR2 and induces proinflammatory cytokine expression.</title>
        <authorList>
            <person name="Kumar A."/>
            <person name="Lewin A."/>
            <person name="Rani P.S."/>
            <person name="Qureshi I.A."/>
            <person name="Devi S."/>
            <person name="Majid M."/>
            <person name="Kamal E."/>
            <person name="Marek S."/>
            <person name="Hasnain S.E."/>
            <person name="Ahmed N."/>
        </authorList>
    </citation>
    <scope>FUNCTION</scope>
    <scope>INTERACTION WITH TLR2</scope>
</reference>
<proteinExistence type="evidence at protein level"/>
<feature type="chain" id="PRO_0000392679" description="Dormancy associated translation inhibitor">
    <location>
        <begin position="1"/>
        <end position="273"/>
    </location>
</feature>
<gene>
    <name type="ordered locus">Rv0079</name>
</gene>
<evidence type="ECO:0000269" key="1">
    <source>
    </source>
</evidence>
<evidence type="ECO:0000269" key="2">
    <source>
    </source>
</evidence>
<evidence type="ECO:0000269" key="3">
    <source>
    </source>
</evidence>
<evidence type="ECO:0000269" key="4">
    <source>
    </source>
</evidence>
<evidence type="ECO:0000269" key="5">
    <source>
    </source>
</evidence>
<evidence type="ECO:0000269" key="6">
    <source>
    </source>
</evidence>
<evidence type="ECO:0000303" key="7">
    <source>
    </source>
</evidence>
<evidence type="ECO:0000305" key="8">
    <source>
    </source>
</evidence>
<sequence>MEPKRSRLVVCAPEPSHAREFPDVAVFSGGRANASQAERLARAVGRVLADRGVTGGARVRLTMANCADGPTLVQINLQVGDTPLRAQAATAGIDDLRPALIRLDRQIVRASAQWCPRPWPDRPRRRLTTPAEALVTRRKPVVLRRATPLQAIAAMDAMDYDVHLFTDAETGEDAVVYRAGPSGLRLARQHHVFPPGWSRCRAPAGPPVPLIVNSRPTPVLTEAAAVDRAREHGLPFLFFTDQATGRGQLLYSRYDGNLGLITPTGDGVADGLA</sequence>